<evidence type="ECO:0000255" key="1">
    <source>
        <dbReference type="HAMAP-Rule" id="MF_01225"/>
    </source>
</evidence>
<evidence type="ECO:0000255" key="2">
    <source>
        <dbReference type="PROSITE-ProRule" id="PRU01266"/>
    </source>
</evidence>
<organism>
    <name type="scientific">Saccharolobus islandicus (strain L.S.2.15 / Lassen #1)</name>
    <name type="common">Sulfolobus islandicus</name>
    <dbReference type="NCBI Taxonomy" id="429572"/>
    <lineage>
        <taxon>Archaea</taxon>
        <taxon>Thermoproteota</taxon>
        <taxon>Thermoprotei</taxon>
        <taxon>Sulfolobales</taxon>
        <taxon>Sulfolobaceae</taxon>
        <taxon>Saccharolobus</taxon>
    </lineage>
</organism>
<comment type="function">
    <text evidence="1">Catalyzes the cyclization of GTP to (8S)-3',8-cyclo-7,8-dihydroguanosine 5'-triphosphate.</text>
</comment>
<comment type="catalytic activity">
    <reaction evidence="1">
        <text>GTP + AH2 + S-adenosyl-L-methionine = (8S)-3',8-cyclo-7,8-dihydroguanosine 5'-triphosphate + 5'-deoxyadenosine + L-methionine + A + H(+)</text>
        <dbReference type="Rhea" id="RHEA:49576"/>
        <dbReference type="ChEBI" id="CHEBI:13193"/>
        <dbReference type="ChEBI" id="CHEBI:15378"/>
        <dbReference type="ChEBI" id="CHEBI:17319"/>
        <dbReference type="ChEBI" id="CHEBI:17499"/>
        <dbReference type="ChEBI" id="CHEBI:37565"/>
        <dbReference type="ChEBI" id="CHEBI:57844"/>
        <dbReference type="ChEBI" id="CHEBI:59789"/>
        <dbReference type="ChEBI" id="CHEBI:131766"/>
        <dbReference type="EC" id="4.1.99.22"/>
    </reaction>
</comment>
<comment type="cofactor">
    <cofactor evidence="1">
        <name>[4Fe-4S] cluster</name>
        <dbReference type="ChEBI" id="CHEBI:49883"/>
    </cofactor>
    <text evidence="1">Binds 2 [4Fe-4S] clusters. Binds 1 [4Fe-4S] cluster coordinated with 3 cysteines and an exchangeable S-adenosyl-L-methionine and 1 [4Fe-4S] cluster coordinated with 3 cysteines and the GTP-derived substrate.</text>
</comment>
<comment type="pathway">
    <text evidence="1">Cofactor biosynthesis; molybdopterin biosynthesis.</text>
</comment>
<comment type="similarity">
    <text evidence="1">Belongs to the radical SAM superfamily. MoaA family.</text>
</comment>
<feature type="chain" id="PRO_1000214002" description="Probable GTP 3',8-cyclase">
    <location>
        <begin position="1"/>
        <end position="308"/>
    </location>
</feature>
<feature type="domain" description="Radical SAM core" evidence="2">
    <location>
        <begin position="4"/>
        <end position="224"/>
    </location>
</feature>
<feature type="binding site" evidence="1">
    <location>
        <position position="13"/>
    </location>
    <ligand>
        <name>GTP</name>
        <dbReference type="ChEBI" id="CHEBI:37565"/>
    </ligand>
</feature>
<feature type="binding site" evidence="1">
    <location>
        <position position="20"/>
    </location>
    <ligand>
        <name>[4Fe-4S] cluster</name>
        <dbReference type="ChEBI" id="CHEBI:49883"/>
        <label>1</label>
        <note>4Fe-4S-S-AdoMet</note>
    </ligand>
</feature>
<feature type="binding site" evidence="1">
    <location>
        <position position="24"/>
    </location>
    <ligand>
        <name>[4Fe-4S] cluster</name>
        <dbReference type="ChEBI" id="CHEBI:49883"/>
        <label>1</label>
        <note>4Fe-4S-S-AdoMet</note>
    </ligand>
</feature>
<feature type="binding site" evidence="1">
    <location>
        <position position="27"/>
    </location>
    <ligand>
        <name>[4Fe-4S] cluster</name>
        <dbReference type="ChEBI" id="CHEBI:49883"/>
        <label>1</label>
        <note>4Fe-4S-S-AdoMet</note>
    </ligand>
</feature>
<feature type="binding site" evidence="1">
    <location>
        <position position="60"/>
    </location>
    <ligand>
        <name>GTP</name>
        <dbReference type="ChEBI" id="CHEBI:37565"/>
    </ligand>
</feature>
<feature type="binding site" evidence="1">
    <location>
        <position position="64"/>
    </location>
    <ligand>
        <name>S-adenosyl-L-methionine</name>
        <dbReference type="ChEBI" id="CHEBI:59789"/>
    </ligand>
</feature>
<feature type="binding site" evidence="1">
    <location>
        <position position="90"/>
    </location>
    <ligand>
        <name>GTP</name>
        <dbReference type="ChEBI" id="CHEBI:37565"/>
    </ligand>
</feature>
<feature type="binding site" evidence="1">
    <location>
        <position position="114"/>
    </location>
    <ligand>
        <name>S-adenosyl-L-methionine</name>
        <dbReference type="ChEBI" id="CHEBI:59789"/>
    </ligand>
</feature>
<feature type="binding site" evidence="1">
    <location>
        <position position="151"/>
    </location>
    <ligand>
        <name>GTP</name>
        <dbReference type="ChEBI" id="CHEBI:37565"/>
    </ligand>
</feature>
<feature type="binding site" evidence="1">
    <location>
        <position position="245"/>
    </location>
    <ligand>
        <name>[4Fe-4S] cluster</name>
        <dbReference type="ChEBI" id="CHEBI:49883"/>
        <label>2</label>
        <note>4Fe-4S-substrate</note>
    </ligand>
</feature>
<feature type="binding site" evidence="1">
    <location>
        <position position="248"/>
    </location>
    <ligand>
        <name>[4Fe-4S] cluster</name>
        <dbReference type="ChEBI" id="CHEBI:49883"/>
        <label>2</label>
        <note>4Fe-4S-substrate</note>
    </ligand>
</feature>
<feature type="binding site" evidence="1">
    <location>
        <begin position="250"/>
        <end position="252"/>
    </location>
    <ligand>
        <name>GTP</name>
        <dbReference type="ChEBI" id="CHEBI:37565"/>
    </ligand>
</feature>
<feature type="binding site" evidence="1">
    <location>
        <position position="262"/>
    </location>
    <ligand>
        <name>[4Fe-4S] cluster</name>
        <dbReference type="ChEBI" id="CHEBI:49883"/>
        <label>2</label>
        <note>4Fe-4S-substrate</note>
    </ligand>
</feature>
<name>MOAA_SACI2</name>
<sequence length="308" mass="35378">MIDRFGRPLEDLRITLTHVCNFECFFCHMEGEEGDNYILSKEDILLVAKVAKNFDINSVKLTGGEPTLRRDLVEIVRGLKQLGYRDVSMTTNGFLLKDLAYKLKLAGLDRINVSLHAISRETFKKITGVDAFDRVIEGIKSAIDVGLVPVKLNFVVNRRNREEVFKFIELSQNLGVNEIHLIELHPVGLGKLAFKEHDDLREIEEYIEKISIKKQIRKKHFRPRYVLPSGLIVEVIKPYANPIFCAGCNRIRLSVDGKLKTCLYREDNVIDILDILKGEYSEDVKEELLGRAFMIAIAIREPNFKYKI</sequence>
<keyword id="KW-0004">4Fe-4S</keyword>
<keyword id="KW-0342">GTP-binding</keyword>
<keyword id="KW-0408">Iron</keyword>
<keyword id="KW-0411">Iron-sulfur</keyword>
<keyword id="KW-0456">Lyase</keyword>
<keyword id="KW-0479">Metal-binding</keyword>
<keyword id="KW-0501">Molybdenum cofactor biosynthesis</keyword>
<keyword id="KW-0547">Nucleotide-binding</keyword>
<keyword id="KW-0949">S-adenosyl-L-methionine</keyword>
<proteinExistence type="inferred from homology"/>
<protein>
    <recommendedName>
        <fullName evidence="1">Probable GTP 3',8-cyclase</fullName>
        <ecNumber evidence="1">4.1.99.22</ecNumber>
    </recommendedName>
    <alternativeName>
        <fullName evidence="1">Molybdenum cofactor biosynthesis protein A</fullName>
    </alternativeName>
</protein>
<reference key="1">
    <citation type="journal article" date="2009" name="Proc. Natl. Acad. Sci. U.S.A.">
        <title>Biogeography of the Sulfolobus islandicus pan-genome.</title>
        <authorList>
            <person name="Reno M.L."/>
            <person name="Held N.L."/>
            <person name="Fields C.J."/>
            <person name="Burke P.V."/>
            <person name="Whitaker R.J."/>
        </authorList>
    </citation>
    <scope>NUCLEOTIDE SEQUENCE [LARGE SCALE GENOMIC DNA]</scope>
    <source>
        <strain>L.S.2.15 / Lassen #1</strain>
    </source>
</reference>
<dbReference type="EC" id="4.1.99.22" evidence="1"/>
<dbReference type="EMBL" id="CP001399">
    <property type="protein sequence ID" value="ACP35877.1"/>
    <property type="molecule type" value="Genomic_DNA"/>
</dbReference>
<dbReference type="RefSeq" id="WP_012713959.1">
    <property type="nucleotide sequence ID" value="NC_012589.1"/>
</dbReference>
<dbReference type="SMR" id="C3MR64"/>
<dbReference type="GeneID" id="7807260"/>
<dbReference type="KEGG" id="sis:LS215_1881"/>
<dbReference type="HOGENOM" id="CLU_009273_0_1_2"/>
<dbReference type="OrthoDB" id="6925at2157"/>
<dbReference type="UniPathway" id="UPA00344"/>
<dbReference type="Proteomes" id="UP000001747">
    <property type="component" value="Chromosome"/>
</dbReference>
<dbReference type="GO" id="GO:0051539">
    <property type="term" value="F:4 iron, 4 sulfur cluster binding"/>
    <property type="evidence" value="ECO:0007669"/>
    <property type="project" value="UniProtKB-UniRule"/>
</dbReference>
<dbReference type="GO" id="GO:0061799">
    <property type="term" value="F:cyclic pyranopterin monophosphate synthase activity"/>
    <property type="evidence" value="ECO:0007669"/>
    <property type="project" value="TreeGrafter"/>
</dbReference>
<dbReference type="GO" id="GO:0061798">
    <property type="term" value="F:GTP 3',8'-cyclase activity"/>
    <property type="evidence" value="ECO:0007669"/>
    <property type="project" value="UniProtKB-UniRule"/>
</dbReference>
<dbReference type="GO" id="GO:0005525">
    <property type="term" value="F:GTP binding"/>
    <property type="evidence" value="ECO:0007669"/>
    <property type="project" value="UniProtKB-UniRule"/>
</dbReference>
<dbReference type="GO" id="GO:0046872">
    <property type="term" value="F:metal ion binding"/>
    <property type="evidence" value="ECO:0007669"/>
    <property type="project" value="UniProtKB-KW"/>
</dbReference>
<dbReference type="GO" id="GO:1904047">
    <property type="term" value="F:S-adenosyl-L-methionine binding"/>
    <property type="evidence" value="ECO:0007669"/>
    <property type="project" value="UniProtKB-UniRule"/>
</dbReference>
<dbReference type="GO" id="GO:0006777">
    <property type="term" value="P:Mo-molybdopterin cofactor biosynthetic process"/>
    <property type="evidence" value="ECO:0007669"/>
    <property type="project" value="UniProtKB-UniRule"/>
</dbReference>
<dbReference type="CDD" id="cd01335">
    <property type="entry name" value="Radical_SAM"/>
    <property type="match status" value="1"/>
</dbReference>
<dbReference type="CDD" id="cd21117">
    <property type="entry name" value="Twitch_MoaA"/>
    <property type="match status" value="1"/>
</dbReference>
<dbReference type="Gene3D" id="3.20.20.70">
    <property type="entry name" value="Aldolase class I"/>
    <property type="match status" value="1"/>
</dbReference>
<dbReference type="HAMAP" id="MF_01225_A">
    <property type="entry name" value="MoaA_A"/>
    <property type="match status" value="1"/>
</dbReference>
<dbReference type="InterPro" id="IPR013785">
    <property type="entry name" value="Aldolase_TIM"/>
</dbReference>
<dbReference type="InterPro" id="IPR006638">
    <property type="entry name" value="Elp3/MiaA/NifB-like_rSAM"/>
</dbReference>
<dbReference type="InterPro" id="IPR013485">
    <property type="entry name" value="MoaA_arc"/>
</dbReference>
<dbReference type="InterPro" id="IPR010505">
    <property type="entry name" value="MoaA_twitch"/>
</dbReference>
<dbReference type="InterPro" id="IPR050105">
    <property type="entry name" value="MoCo_biosynth_MoaA/MoaC"/>
</dbReference>
<dbReference type="InterPro" id="IPR007197">
    <property type="entry name" value="rSAM"/>
</dbReference>
<dbReference type="NCBIfam" id="TIGR02668">
    <property type="entry name" value="moaA_archaeal"/>
    <property type="match status" value="1"/>
</dbReference>
<dbReference type="NCBIfam" id="NF001199">
    <property type="entry name" value="PRK00164.2-1"/>
    <property type="match status" value="1"/>
</dbReference>
<dbReference type="PANTHER" id="PTHR22960:SF0">
    <property type="entry name" value="MOLYBDENUM COFACTOR BIOSYNTHESIS PROTEIN 1"/>
    <property type="match status" value="1"/>
</dbReference>
<dbReference type="PANTHER" id="PTHR22960">
    <property type="entry name" value="MOLYBDOPTERIN COFACTOR SYNTHESIS PROTEIN A"/>
    <property type="match status" value="1"/>
</dbReference>
<dbReference type="Pfam" id="PF06463">
    <property type="entry name" value="Mob_synth_C"/>
    <property type="match status" value="1"/>
</dbReference>
<dbReference type="Pfam" id="PF04055">
    <property type="entry name" value="Radical_SAM"/>
    <property type="match status" value="1"/>
</dbReference>
<dbReference type="SFLD" id="SFLDG01383">
    <property type="entry name" value="cyclic_pyranopterin_phosphate"/>
    <property type="match status" value="1"/>
</dbReference>
<dbReference type="SFLD" id="SFLDG01067">
    <property type="entry name" value="SPASM/twitch_domain_containing"/>
    <property type="match status" value="1"/>
</dbReference>
<dbReference type="SMART" id="SM00729">
    <property type="entry name" value="Elp3"/>
    <property type="match status" value="1"/>
</dbReference>
<dbReference type="SUPFAM" id="SSF102114">
    <property type="entry name" value="Radical SAM enzymes"/>
    <property type="match status" value="1"/>
</dbReference>
<dbReference type="PROSITE" id="PS51918">
    <property type="entry name" value="RADICAL_SAM"/>
    <property type="match status" value="1"/>
</dbReference>
<gene>
    <name evidence="1" type="primary">moaA</name>
    <name type="ordered locus">LS215_1881</name>
</gene>
<accession>C3MR64</accession>